<protein>
    <recommendedName>
        <fullName>Ras-like protein 1</fullName>
        <ecNumber evidence="2">3.6.5.2</ecNumber>
    </recommendedName>
</protein>
<feature type="chain" id="PRO_0000082679" description="Ras-like protein 1">
    <location>
        <begin position="1"/>
        <end position="200"/>
    </location>
</feature>
<feature type="propeptide" id="PRO_0000281322" description="Removed in mature form" evidence="1">
    <location>
        <begin position="201"/>
        <end position="203"/>
    </location>
</feature>
<feature type="short sequence motif" description="Effector region" evidence="3">
    <location>
        <begin position="39"/>
        <end position="47"/>
    </location>
</feature>
<feature type="binding site" evidence="1">
    <location>
        <begin position="17"/>
        <end position="24"/>
    </location>
    <ligand>
        <name>GTP</name>
        <dbReference type="ChEBI" id="CHEBI:37565"/>
    </ligand>
</feature>
<feature type="binding site" evidence="1">
    <location>
        <begin position="64"/>
        <end position="68"/>
    </location>
    <ligand>
        <name>GTP</name>
        <dbReference type="ChEBI" id="CHEBI:37565"/>
    </ligand>
</feature>
<feature type="binding site" evidence="1">
    <location>
        <begin position="123"/>
        <end position="126"/>
    </location>
    <ligand>
        <name>GTP</name>
        <dbReference type="ChEBI" id="CHEBI:37565"/>
    </ligand>
</feature>
<feature type="modified residue" description="Cysteine methyl ester" evidence="1">
    <location>
        <position position="200"/>
    </location>
</feature>
<feature type="lipid moiety-binding region" description="S-farnesyl cysteine" evidence="1">
    <location>
        <position position="200"/>
    </location>
</feature>
<dbReference type="EC" id="3.6.5.2" evidence="2"/>
<dbReference type="EMBL" id="M55175">
    <property type="protein sequence ID" value="AAA83378.1"/>
    <property type="molecule type" value="Genomic_DNA"/>
</dbReference>
<dbReference type="PIR" id="A36365">
    <property type="entry name" value="A36365"/>
</dbReference>
<dbReference type="SMR" id="P22278"/>
<dbReference type="GO" id="GO:0005886">
    <property type="term" value="C:plasma membrane"/>
    <property type="evidence" value="ECO:0007669"/>
    <property type="project" value="UniProtKB-SubCell"/>
</dbReference>
<dbReference type="GO" id="GO:0003925">
    <property type="term" value="F:G protein activity"/>
    <property type="evidence" value="ECO:0007669"/>
    <property type="project" value="UniProtKB-EC"/>
</dbReference>
<dbReference type="GO" id="GO:0005525">
    <property type="term" value="F:GTP binding"/>
    <property type="evidence" value="ECO:0007669"/>
    <property type="project" value="UniProtKB-KW"/>
</dbReference>
<dbReference type="GO" id="GO:0007165">
    <property type="term" value="P:signal transduction"/>
    <property type="evidence" value="ECO:0007669"/>
    <property type="project" value="InterPro"/>
</dbReference>
<dbReference type="CDD" id="cd04138">
    <property type="entry name" value="H_N_K_Ras_like"/>
    <property type="match status" value="1"/>
</dbReference>
<dbReference type="FunFam" id="3.40.50.300:FF:000080">
    <property type="entry name" value="Ras-like GTPase Ras1"/>
    <property type="match status" value="1"/>
</dbReference>
<dbReference type="Gene3D" id="3.40.50.300">
    <property type="entry name" value="P-loop containing nucleotide triphosphate hydrolases"/>
    <property type="match status" value="1"/>
</dbReference>
<dbReference type="InterPro" id="IPR027417">
    <property type="entry name" value="P-loop_NTPase"/>
</dbReference>
<dbReference type="InterPro" id="IPR005225">
    <property type="entry name" value="Small_GTP-bd"/>
</dbReference>
<dbReference type="InterPro" id="IPR001806">
    <property type="entry name" value="Small_GTPase"/>
</dbReference>
<dbReference type="InterPro" id="IPR020849">
    <property type="entry name" value="Small_GTPase_Ras-type"/>
</dbReference>
<dbReference type="NCBIfam" id="TIGR00231">
    <property type="entry name" value="small_GTP"/>
    <property type="match status" value="1"/>
</dbReference>
<dbReference type="PANTHER" id="PTHR24070">
    <property type="entry name" value="RAS, DI-RAS, AND RHEB FAMILY MEMBERS OF SMALL GTPASE SUPERFAMILY"/>
    <property type="match status" value="1"/>
</dbReference>
<dbReference type="Pfam" id="PF00071">
    <property type="entry name" value="Ras"/>
    <property type="match status" value="1"/>
</dbReference>
<dbReference type="PRINTS" id="PR00449">
    <property type="entry name" value="RASTRNSFRMNG"/>
</dbReference>
<dbReference type="SMART" id="SM00175">
    <property type="entry name" value="RAB"/>
    <property type="match status" value="1"/>
</dbReference>
<dbReference type="SMART" id="SM00176">
    <property type="entry name" value="RAN"/>
    <property type="match status" value="1"/>
</dbReference>
<dbReference type="SMART" id="SM00173">
    <property type="entry name" value="RAS"/>
    <property type="match status" value="1"/>
</dbReference>
<dbReference type="SMART" id="SM00174">
    <property type="entry name" value="RHO"/>
    <property type="match status" value="1"/>
</dbReference>
<dbReference type="SUPFAM" id="SSF52540">
    <property type="entry name" value="P-loop containing nucleoside triphosphate hydrolases"/>
    <property type="match status" value="1"/>
</dbReference>
<dbReference type="PROSITE" id="PS51421">
    <property type="entry name" value="RAS"/>
    <property type="match status" value="1"/>
</dbReference>
<sequence length="203" mass="23236">MSKASSFVREYKLVMVGGGGVGKSALTIQFIQSHFVDEYDPTIEDSYRKQCVIDSETALLDVLDTAGQEEYSAMREQYMRNGEGFLLVYSITSRLSFEEITTFYQQICRVKDRDYFPMVLVGNKCDLEGDRQVSSQEGRDLAKNFGCQFIETSAKQRINVDEAFFEVVRDIRRYNKEQETRGHDQFGIQDAPDVASDKCCILM</sequence>
<name>RAS1_MUCCL</name>
<organism>
    <name type="scientific">Mucor circinelloides f. lusitanicus</name>
    <name type="common">Mucor racemosus var. lusitanicus</name>
    <dbReference type="NCBI Taxonomy" id="29924"/>
    <lineage>
        <taxon>Eukaryota</taxon>
        <taxon>Fungi</taxon>
        <taxon>Fungi incertae sedis</taxon>
        <taxon>Mucoromycota</taxon>
        <taxon>Mucoromycotina</taxon>
        <taxon>Mucoromycetes</taxon>
        <taxon>Mucorales</taxon>
        <taxon>Mucorineae</taxon>
        <taxon>Mucoraceae</taxon>
        <taxon>Mucor</taxon>
    </lineage>
</organism>
<reference key="1">
    <citation type="journal article" date="1990" name="Mol. Cell. Biol.">
        <title>Expression of a gene family in the dimorphic fungus Mucor racemosus which exhibits striking similarity to human ras genes.</title>
        <authorList>
            <person name="Casale W.L."/>
            <person name="McConnell D.G."/>
            <person name="Wang S.-Y."/>
            <person name="Lee Y.-J."/>
            <person name="Linz J.E."/>
        </authorList>
    </citation>
    <scope>NUCLEOTIDE SEQUENCE [GENOMIC DNA]</scope>
    <source>
        <strain>ATCC 1216b / BCRC 32522 / CBS 277.49 / NRRL 3631</strain>
    </source>
</reference>
<gene>
    <name type="primary">RAS1</name>
</gene>
<comment type="catalytic activity">
    <reaction evidence="2">
        <text>GTP + H2O = GDP + phosphate + H(+)</text>
        <dbReference type="Rhea" id="RHEA:19669"/>
        <dbReference type="ChEBI" id="CHEBI:15377"/>
        <dbReference type="ChEBI" id="CHEBI:15378"/>
        <dbReference type="ChEBI" id="CHEBI:37565"/>
        <dbReference type="ChEBI" id="CHEBI:43474"/>
        <dbReference type="ChEBI" id="CHEBI:58189"/>
        <dbReference type="EC" id="3.6.5.2"/>
    </reaction>
</comment>
<comment type="activity regulation">
    <text>Alternates between an inactive form bound to GDP and an active form bound to GTP. Activated by a guanine nucleotide-exchange factor (GEF) and inactivated by a GTPase-activating protein (GAP).</text>
</comment>
<comment type="subcellular location">
    <subcellularLocation>
        <location>Cell membrane</location>
        <topology>Lipid-anchor</topology>
    </subcellularLocation>
</comment>
<comment type="developmental stage">
    <text>In all developmental stages analyzed. Its signal was more intense in sporulating mycelium.</text>
</comment>
<comment type="similarity">
    <text evidence="3">Belongs to the small GTPase superfamily. Ras family.</text>
</comment>
<accession>P22278</accession>
<evidence type="ECO:0000250" key="1"/>
<evidence type="ECO:0000250" key="2">
    <source>
        <dbReference type="UniProtKB" id="P01112"/>
    </source>
</evidence>
<evidence type="ECO:0000305" key="3"/>
<keyword id="KW-1003">Cell membrane</keyword>
<keyword id="KW-0342">GTP-binding</keyword>
<keyword id="KW-0378">Hydrolase</keyword>
<keyword id="KW-0449">Lipoprotein</keyword>
<keyword id="KW-0472">Membrane</keyword>
<keyword id="KW-0488">Methylation</keyword>
<keyword id="KW-0547">Nucleotide-binding</keyword>
<keyword id="KW-0636">Prenylation</keyword>
<proteinExistence type="evidence at transcript level"/>